<reference key="1">
    <citation type="journal article" date="2001" name="Cell">
        <title>The C. elegans zyg-1 gene encodes a regulator of centrosome duplication with distinct maternal and paternal roles in the embryo.</title>
        <authorList>
            <person name="O'Connell K.F."/>
            <person name="Caron C."/>
            <person name="Kopish K.R."/>
            <person name="Hurd D.D."/>
            <person name="Kemphues K.J."/>
            <person name="Li Y."/>
            <person name="White J.G."/>
        </authorList>
    </citation>
    <scope>NUCLEOTIDE SEQUENCE [MRNA]</scope>
    <scope>FUNCTION</scope>
    <scope>SUBCELLULAR LOCATION</scope>
    <scope>MUTAGENESIS OF LYS-41; ARG-371 AND PRO-432</scope>
    <source>
        <strain>Bristol N2</strain>
    </source>
</reference>
<reference key="2">
    <citation type="journal article" date="1998" name="Science">
        <title>Genome sequence of the nematode C. elegans: a platform for investigating biology.</title>
        <authorList>
            <consortium name="The C. elegans sequencing consortium"/>
        </authorList>
    </citation>
    <scope>NUCLEOTIDE SEQUENCE [LARGE SCALE GENOMIC DNA]</scope>
    <source>
        <strain>Bristol N2</strain>
    </source>
</reference>
<reference key="3">
    <citation type="journal article" date="2004" name="Nat. Cell Biol.">
        <title>Centriolar SAS-5 is required for centrosome duplication in C. elegans.</title>
        <authorList>
            <person name="Delattre M."/>
            <person name="Leidel S."/>
            <person name="Wani K."/>
            <person name="Baumer K."/>
            <person name="Bamat J."/>
            <person name="Schnabel H."/>
            <person name="Feichtinger R."/>
            <person name="Schnabel R."/>
            <person name="Goenczy P."/>
        </authorList>
    </citation>
    <scope>FUNCTION</scope>
</reference>
<reference key="4">
    <citation type="journal article" date="2005" name="Nat. Cell Biol.">
        <title>SAS-6 defines a protein family required for centrosome duplication in C. elegans and in human cells.</title>
        <authorList>
            <person name="Leidel S."/>
            <person name="Delattre M."/>
            <person name="Cerutti L."/>
            <person name="Baumer K."/>
            <person name="Goenczy P."/>
        </authorList>
    </citation>
    <scope>FUNCTION</scope>
</reference>
<reference key="5">
    <citation type="journal article" date="2008" name="Dev. Cell">
        <title>The conserved protein SZY-20 opposes the Plk4-related kinase ZYG-1 to limit centrosome size.</title>
        <authorList>
            <person name="Song M.H."/>
            <person name="Aravind L."/>
            <person name="Mueller-Reichert T."/>
            <person name="O'Connell K.F."/>
        </authorList>
    </citation>
    <scope>FUNCTION</scope>
    <scope>SUBCELLULAR LOCATION</scope>
    <scope>MUTAGENESIS OF PRO-442</scope>
</reference>
<reference key="6">
    <citation type="journal article" date="2008" name="Genes Dev.">
        <title>A new mechanism controlling kinetochore-microtubule interactions revealed by comparison of two dynein-targeting components: SPDL-1 and the Rod/Zwilch/Zw10 complex.</title>
        <authorList>
            <person name="Gassmann R."/>
            <person name="Essex A."/>
            <person name="Hu J.-S."/>
            <person name="Maddox P.S."/>
            <person name="Motegi F."/>
            <person name="Sugimoto A."/>
            <person name="O'Rourke S.M."/>
            <person name="Bowerman B."/>
            <person name="McLeod I."/>
            <person name="Yates J.R. III"/>
            <person name="Oegema K."/>
            <person name="Cheeseman I.M."/>
            <person name="Desai A."/>
        </authorList>
    </citation>
    <scope>FUNCTION</scope>
    <scope>DISRUPTION PHENOTYPE</scope>
</reference>
<reference key="7">
    <citation type="journal article" date="2008" name="J. Cell Biol.">
        <title>SPDL-1 functions as a kinetochore receptor for MDF-1 in Caenorhabditis elegans.</title>
        <authorList>
            <person name="Yamamoto T.G."/>
            <person name="Watanabe S."/>
            <person name="Essex A."/>
            <person name="Kitagawa R."/>
        </authorList>
    </citation>
    <scope>FUNCTION</scope>
    <scope>DISRUPTION PHENOTYPE</scope>
</reference>
<reference key="8">
    <citation type="journal article" date="2009" name="Mol. Biol. Cell">
        <title>Systematic analysis in Caenorhabditis elegans reveals that the spindle checkpoint is composed of two largely independent branches.</title>
        <authorList>
            <person name="Essex A."/>
            <person name="Dammermann A."/>
            <person name="Lewellyn L."/>
            <person name="Oegema K."/>
            <person name="Desai A."/>
        </authorList>
    </citation>
    <scope>FUNCTION</scope>
</reference>
<reference key="9">
    <citation type="journal article" date="2012" name="J. Cell Sci.">
        <title>The C. elegans F-box proteins LIN-23 and SEL-10 antagonize centrosome duplication by regulating ZYG-1 levels.</title>
        <authorList>
            <person name="Peel N."/>
            <person name="Dougherty M."/>
            <person name="Goeres J."/>
            <person name="Liu Y."/>
            <person name="O'Connell K.F."/>
        </authorList>
    </citation>
    <scope>FUNCTION</scope>
    <scope>INTERACTION WITH SEL-10</scope>
    <scope>SUBCELLULAR LOCATION</scope>
    <scope>DEVELOPMENTAL STAGE</scope>
    <scope>UBIQUITINATION</scope>
</reference>
<reference key="10">
    <citation type="journal article" date="2016" name="PLoS Genet.">
        <title>ATX-2, the C. elegans ortholog of human Ataxin-2, regulates centrosome size and microtubule dynamics.</title>
        <authorList>
            <person name="Stubenvoll M.D."/>
            <person name="Medley J.C."/>
            <person name="Irwin M."/>
            <person name="Song M.H."/>
        </authorList>
    </citation>
    <scope>FUNCTION</scope>
    <scope>SUBCELLULAR LOCATION</scope>
    <scope>MUTAGENESIS OF PRO-442</scope>
</reference>
<sequence length="706" mass="79415">MSGGKSGSRLSAYSHLKEIGKGGFGVVYAAQRENGEKVAIKRIDKKVPKNRVWTEIQTMKELKKSKYVVEFYEDFVEDGYTYIVMELCEGGSLQAYVREHGALDDATAVHVLRQLISAVSFMHRVNVIHRDLSAGNVFIKDSKKKKMTVKLGDFGLATTLGRGETTCTIVGTPGFIAPQVYDQEYTQSADVYSLGAVLYTMLTARNPPPKGLPPTCGMSPNAARLVEQMMDTDAKKRIPLTQIVLSEFMYENTNENAVIFSREHSRDGRRQRSREPVRSSRDDRSRDGRALIRSSSQPAHSGRAPLSNRPIHDRMPSTSSRGFDSERGRERDRDSGRGTVPPSREDRNRSQLWPIRMDRLEGQRVCTAGGRYIVELDTRCRFEVAAQGNFVKRILIVEVDEMVQTVYVHRIPDRTVRGRNGEEELITLTNNPFVYTSYSQMPKEVQNDYMRLQKMVAVTISGRVAKVTFRRPSQFPDAQAQLMENGDLRIKLPRSVIVRKMDNGEIFNCIDGIATQKQAVSGITLTKVNEVYKYLIRFEQCLNGMDRGMVCFPIVFSAGTNMVGSSPSSLMPSGSSQTSRFPFSNLSNNQPSLVPHSAPFLTKPTSSQRASSANVQRRVSTDENSSPSVAPSKYKIKIDPTTQKVRSIQATDGRVLRCSTSKADQFIFTDPAIRPDDQRFMRTDRVPDRASEMLHTLCERMRKLHQ</sequence>
<evidence type="ECO:0000255" key="1">
    <source>
        <dbReference type="PROSITE-ProRule" id="PRU00159"/>
    </source>
</evidence>
<evidence type="ECO:0000255" key="2">
    <source>
        <dbReference type="PROSITE-ProRule" id="PRU10028"/>
    </source>
</evidence>
<evidence type="ECO:0000256" key="3">
    <source>
        <dbReference type="SAM" id="MobiDB-lite"/>
    </source>
</evidence>
<evidence type="ECO:0000269" key="4">
    <source>
    </source>
</evidence>
<evidence type="ECO:0000269" key="5">
    <source>
    </source>
</evidence>
<evidence type="ECO:0000269" key="6">
    <source>
    </source>
</evidence>
<evidence type="ECO:0000269" key="7">
    <source>
    </source>
</evidence>
<evidence type="ECO:0000269" key="8">
    <source>
    </source>
</evidence>
<evidence type="ECO:0000269" key="9">
    <source>
    </source>
</evidence>
<evidence type="ECO:0000269" key="10">
    <source>
    </source>
</evidence>
<evidence type="ECO:0000269" key="11">
    <source>
    </source>
</evidence>
<evidence type="ECO:0000269" key="12">
    <source>
    </source>
</evidence>
<evidence type="ECO:0000305" key="13"/>
<evidence type="ECO:0000312" key="14">
    <source>
        <dbReference type="WormBase" id="F59E12.2"/>
    </source>
</evidence>
<evidence type="ECO:0007829" key="15">
    <source>
        <dbReference type="PDB" id="4NKB"/>
    </source>
</evidence>
<gene>
    <name evidence="14" type="primary">zyg-1</name>
    <name evidence="14" type="ORF">F59E12.2</name>
</gene>
<protein>
    <recommendedName>
        <fullName>Probable serine/threonine-protein kinase zyg-1</fullName>
        <ecNumber>2.7.11.1</ecNumber>
    </recommendedName>
    <alternativeName>
        <fullName>Zygote defective protein 1</fullName>
    </alternativeName>
</protein>
<proteinExistence type="evidence at protein level"/>
<dbReference type="EC" id="2.7.11.1"/>
<dbReference type="EMBL" id="AF285179">
    <property type="protein sequence ID" value="AAG15377.1"/>
    <property type="molecule type" value="mRNA"/>
</dbReference>
<dbReference type="EMBL" id="FO080594">
    <property type="protein sequence ID" value="CCD64966.1"/>
    <property type="molecule type" value="Genomic_DNA"/>
</dbReference>
<dbReference type="PIR" id="T15267">
    <property type="entry name" value="T15267"/>
</dbReference>
<dbReference type="RefSeq" id="NP_495103.1">
    <property type="nucleotide sequence ID" value="NM_062702.6"/>
</dbReference>
<dbReference type="PDB" id="4NKB">
    <property type="method" value="X-ray"/>
    <property type="resolution" value="2.30 A"/>
    <property type="chains" value="A/B=338-564"/>
</dbReference>
<dbReference type="PDBsum" id="4NKB"/>
<dbReference type="SMR" id="Q9GT24"/>
<dbReference type="BioGRID" id="39298">
    <property type="interactions" value="21"/>
</dbReference>
<dbReference type="DIP" id="DIP-24892N"/>
<dbReference type="FunCoup" id="Q9GT24">
    <property type="interactions" value="237"/>
</dbReference>
<dbReference type="IntAct" id="Q9GT24">
    <property type="interactions" value="12"/>
</dbReference>
<dbReference type="STRING" id="6239.F59E12.2.2"/>
<dbReference type="iPTMnet" id="Q9GT24"/>
<dbReference type="PaxDb" id="6239-F59E12.2.2"/>
<dbReference type="EnsemblMetazoa" id="F59E12.2.1">
    <property type="protein sequence ID" value="F59E12.2.1"/>
    <property type="gene ID" value="WBGene00006988"/>
</dbReference>
<dbReference type="GeneID" id="173956"/>
<dbReference type="KEGG" id="cel:CELE_F59E12.2"/>
<dbReference type="UCSC" id="F59E12.2.1">
    <property type="organism name" value="c. elegans"/>
</dbReference>
<dbReference type="AGR" id="WB:WBGene00006988"/>
<dbReference type="CTD" id="173956"/>
<dbReference type="WormBase" id="F59E12.2">
    <property type="protein sequence ID" value="CE28571"/>
    <property type="gene ID" value="WBGene00006988"/>
    <property type="gene designation" value="zyg-1"/>
</dbReference>
<dbReference type="eggNOG" id="KOG0032">
    <property type="taxonomic scope" value="Eukaryota"/>
</dbReference>
<dbReference type="GeneTree" id="ENSGT00940000166992"/>
<dbReference type="HOGENOM" id="CLU_390907_0_0_1"/>
<dbReference type="InParanoid" id="Q9GT24"/>
<dbReference type="OMA" id="WPIRMER"/>
<dbReference type="OrthoDB" id="346907at2759"/>
<dbReference type="SignaLink" id="Q9GT24"/>
<dbReference type="CD-CODE" id="1E117272">
    <property type="entry name" value="Centrosome"/>
</dbReference>
<dbReference type="EvolutionaryTrace" id="Q9GT24"/>
<dbReference type="PRO" id="PR:Q9GT24"/>
<dbReference type="Proteomes" id="UP000001940">
    <property type="component" value="Chromosome II"/>
</dbReference>
<dbReference type="Bgee" id="WBGene00006988">
    <property type="expression patterns" value="Expressed in germ line (C elegans) and 4 other cell types or tissues"/>
</dbReference>
<dbReference type="GO" id="GO:0005814">
    <property type="term" value="C:centriole"/>
    <property type="evidence" value="ECO:0000314"/>
    <property type="project" value="UniProtKB"/>
</dbReference>
<dbReference type="GO" id="GO:0005813">
    <property type="term" value="C:centrosome"/>
    <property type="evidence" value="ECO:0000314"/>
    <property type="project" value="UniProtKB"/>
</dbReference>
<dbReference type="GO" id="GO:0005737">
    <property type="term" value="C:cytoplasm"/>
    <property type="evidence" value="ECO:0000318"/>
    <property type="project" value="GO_Central"/>
</dbReference>
<dbReference type="GO" id="GO:0005829">
    <property type="term" value="C:cytosol"/>
    <property type="evidence" value="ECO:0000318"/>
    <property type="project" value="GO_Central"/>
</dbReference>
<dbReference type="GO" id="GO:0005634">
    <property type="term" value="C:nucleus"/>
    <property type="evidence" value="ECO:0000318"/>
    <property type="project" value="GO_Central"/>
</dbReference>
<dbReference type="GO" id="GO:0005524">
    <property type="term" value="F:ATP binding"/>
    <property type="evidence" value="ECO:0007669"/>
    <property type="project" value="UniProtKB-KW"/>
</dbReference>
<dbReference type="GO" id="GO:0004694">
    <property type="term" value="F:eukaryotic translation initiation factor 2alpha kinase activity"/>
    <property type="evidence" value="ECO:0000318"/>
    <property type="project" value="GO_Central"/>
</dbReference>
<dbReference type="GO" id="GO:0042802">
    <property type="term" value="F:identical protein binding"/>
    <property type="evidence" value="ECO:0000353"/>
    <property type="project" value="IntAct"/>
</dbReference>
<dbReference type="GO" id="GO:0106310">
    <property type="term" value="F:protein serine kinase activity"/>
    <property type="evidence" value="ECO:0007669"/>
    <property type="project" value="RHEA"/>
</dbReference>
<dbReference type="GO" id="GO:0004674">
    <property type="term" value="F:protein serine/threonine kinase activity"/>
    <property type="evidence" value="ECO:0000314"/>
    <property type="project" value="WormBase"/>
</dbReference>
<dbReference type="GO" id="GO:0090268">
    <property type="term" value="P:activation of mitotic cell cycle spindle assembly checkpoint"/>
    <property type="evidence" value="ECO:0000316"/>
    <property type="project" value="UniProtKB"/>
</dbReference>
<dbReference type="GO" id="GO:0051301">
    <property type="term" value="P:cell division"/>
    <property type="evidence" value="ECO:0000315"/>
    <property type="project" value="WormBase"/>
</dbReference>
<dbReference type="GO" id="GO:0034198">
    <property type="term" value="P:cellular response to amino acid starvation"/>
    <property type="evidence" value="ECO:0000318"/>
    <property type="project" value="GO_Central"/>
</dbReference>
<dbReference type="GO" id="GO:0007099">
    <property type="term" value="P:centriole replication"/>
    <property type="evidence" value="ECO:0000315"/>
    <property type="project" value="WormBase"/>
</dbReference>
<dbReference type="GO" id="GO:0051298">
    <property type="term" value="P:centrosome duplication"/>
    <property type="evidence" value="ECO:0000315"/>
    <property type="project" value="UniProtKB"/>
</dbReference>
<dbReference type="GO" id="GO:0016048">
    <property type="term" value="P:detection of temperature stimulus"/>
    <property type="evidence" value="ECO:0000316"/>
    <property type="project" value="UniProtKB"/>
</dbReference>
<dbReference type="GO" id="GO:0009792">
    <property type="term" value="P:embryo development ending in birth or egg hatching"/>
    <property type="evidence" value="ECO:0000315"/>
    <property type="project" value="WormBase"/>
</dbReference>
<dbReference type="GO" id="GO:0000278">
    <property type="term" value="P:mitotic cell cycle"/>
    <property type="evidence" value="ECO:0000314"/>
    <property type="project" value="UniProtKB"/>
</dbReference>
<dbReference type="GO" id="GO:0032057">
    <property type="term" value="P:negative regulation of translational initiation in response to stress"/>
    <property type="evidence" value="ECO:0000318"/>
    <property type="project" value="GO_Central"/>
</dbReference>
<dbReference type="GO" id="GO:0010825">
    <property type="term" value="P:positive regulation of centrosome duplication"/>
    <property type="evidence" value="ECO:0000315"/>
    <property type="project" value="UniProtKB"/>
</dbReference>
<dbReference type="GO" id="GO:0045977">
    <property type="term" value="P:positive regulation of mitotic cell cycle, embryonic"/>
    <property type="evidence" value="ECO:0000315"/>
    <property type="project" value="UniProtKB"/>
</dbReference>
<dbReference type="GO" id="GO:1905342">
    <property type="term" value="P:positive regulation of protein localization to kinetochore"/>
    <property type="evidence" value="ECO:0000316"/>
    <property type="project" value="UniProtKB"/>
</dbReference>
<dbReference type="GO" id="GO:1905832">
    <property type="term" value="P:positive regulation of spindle assembly"/>
    <property type="evidence" value="ECO:0000315"/>
    <property type="project" value="UniProtKB"/>
</dbReference>
<dbReference type="GO" id="GO:0008104">
    <property type="term" value="P:protein localization"/>
    <property type="evidence" value="ECO:0000315"/>
    <property type="project" value="UniProtKB"/>
</dbReference>
<dbReference type="GO" id="GO:0051726">
    <property type="term" value="P:regulation of cell cycle"/>
    <property type="evidence" value="ECO:0000315"/>
    <property type="project" value="UniProtKB"/>
</dbReference>
<dbReference type="GO" id="GO:0010824">
    <property type="term" value="P:regulation of centrosome duplication"/>
    <property type="evidence" value="ECO:0000316"/>
    <property type="project" value="UniProtKB"/>
</dbReference>
<dbReference type="GO" id="GO:0009794">
    <property type="term" value="P:regulation of mitotic cell cycle, embryonic"/>
    <property type="evidence" value="ECO:0000316"/>
    <property type="project" value="UniProtKB"/>
</dbReference>
<dbReference type="GO" id="GO:1903436">
    <property type="term" value="P:regulation of mitotic cytokinetic process"/>
    <property type="evidence" value="ECO:0000316"/>
    <property type="project" value="UniProtKB"/>
</dbReference>
<dbReference type="GO" id="GO:1904779">
    <property type="term" value="P:regulation of protein localization to centrosome"/>
    <property type="evidence" value="ECO:0000316"/>
    <property type="project" value="UniProtKB"/>
</dbReference>
<dbReference type="GO" id="GO:0090169">
    <property type="term" value="P:regulation of spindle assembly"/>
    <property type="evidence" value="ECO:0000316"/>
    <property type="project" value="UniProtKB"/>
</dbReference>
<dbReference type="GO" id="GO:0051225">
    <property type="term" value="P:spindle assembly"/>
    <property type="evidence" value="ECO:0000315"/>
    <property type="project" value="WormBase"/>
</dbReference>
<dbReference type="FunFam" id="1.10.510.10:FF:001862">
    <property type="entry name" value="Probable serine/threonine-protein kinase zyg-1"/>
    <property type="match status" value="1"/>
</dbReference>
<dbReference type="FunFam" id="3.30.1120.120:FF:000002">
    <property type="entry name" value="Probable serine/threonine-protein kinase zyg-1"/>
    <property type="match status" value="1"/>
</dbReference>
<dbReference type="FunFam" id="3.30.1120.130:FF:000003">
    <property type="entry name" value="Probable serine/threonine-protein kinase zyg-1"/>
    <property type="match status" value="1"/>
</dbReference>
<dbReference type="Gene3D" id="3.30.1120.120">
    <property type="match status" value="1"/>
</dbReference>
<dbReference type="Gene3D" id="3.30.1120.130">
    <property type="match status" value="1"/>
</dbReference>
<dbReference type="Gene3D" id="1.10.510.10">
    <property type="entry name" value="Transferase(Phosphotransferase) domain 1"/>
    <property type="match status" value="1"/>
</dbReference>
<dbReference type="InterPro" id="IPR011009">
    <property type="entry name" value="Kinase-like_dom_sf"/>
</dbReference>
<dbReference type="InterPro" id="IPR047108">
    <property type="entry name" value="Plk4-like_POLO_box_2_sf"/>
</dbReference>
<dbReference type="InterPro" id="IPR000719">
    <property type="entry name" value="Prot_kinase_dom"/>
</dbReference>
<dbReference type="InterPro" id="IPR017441">
    <property type="entry name" value="Protein_kinase_ATP_BS"/>
</dbReference>
<dbReference type="InterPro" id="IPR046437">
    <property type="entry name" value="Ser_Thr-PK_POLO_box_1_sf"/>
</dbReference>
<dbReference type="InterPro" id="IPR008266">
    <property type="entry name" value="Tyr_kinase_AS"/>
</dbReference>
<dbReference type="InterPro" id="IPR040733">
    <property type="entry name" value="Zyg-1_PB1"/>
</dbReference>
<dbReference type="InterPro" id="IPR040734">
    <property type="entry name" value="Zyg-1_PB2"/>
</dbReference>
<dbReference type="PANTHER" id="PTHR24345">
    <property type="entry name" value="SERINE/THREONINE-PROTEIN KINASE PLK"/>
    <property type="match status" value="1"/>
</dbReference>
<dbReference type="PANTHER" id="PTHR24345:SF91">
    <property type="entry name" value="SERINE_THREONINE-PROTEIN KINASE PLK4"/>
    <property type="match status" value="1"/>
</dbReference>
<dbReference type="Pfam" id="PF00069">
    <property type="entry name" value="Pkinase"/>
    <property type="match status" value="1"/>
</dbReference>
<dbReference type="Pfam" id="PF18531">
    <property type="entry name" value="Polo_box_2"/>
    <property type="match status" value="1"/>
</dbReference>
<dbReference type="Pfam" id="PF18544">
    <property type="entry name" value="Polo_box_3"/>
    <property type="match status" value="1"/>
</dbReference>
<dbReference type="SUPFAM" id="SSF56112">
    <property type="entry name" value="Protein kinase-like (PK-like)"/>
    <property type="match status" value="1"/>
</dbReference>
<dbReference type="PROSITE" id="PS00107">
    <property type="entry name" value="PROTEIN_KINASE_ATP"/>
    <property type="match status" value="1"/>
</dbReference>
<dbReference type="PROSITE" id="PS50011">
    <property type="entry name" value="PROTEIN_KINASE_DOM"/>
    <property type="match status" value="1"/>
</dbReference>
<dbReference type="PROSITE" id="PS00109">
    <property type="entry name" value="PROTEIN_KINASE_TYR"/>
    <property type="match status" value="1"/>
</dbReference>
<feature type="chain" id="PRO_0000086852" description="Probable serine/threonine-protein kinase zyg-1">
    <location>
        <begin position="1"/>
        <end position="706"/>
    </location>
</feature>
<feature type="domain" description="Protein kinase" evidence="1">
    <location>
        <begin position="13"/>
        <end position="249"/>
    </location>
</feature>
<feature type="region of interest" description="Disordered" evidence="3">
    <location>
        <begin position="261"/>
        <end position="351"/>
    </location>
</feature>
<feature type="region of interest" description="Disordered" evidence="3">
    <location>
        <begin position="566"/>
        <end position="632"/>
    </location>
</feature>
<feature type="compositionally biased region" description="Basic and acidic residues" evidence="3">
    <location>
        <begin position="261"/>
        <end position="290"/>
    </location>
</feature>
<feature type="compositionally biased region" description="Basic and acidic residues" evidence="3">
    <location>
        <begin position="323"/>
        <end position="336"/>
    </location>
</feature>
<feature type="compositionally biased region" description="Low complexity" evidence="3">
    <location>
        <begin position="566"/>
        <end position="579"/>
    </location>
</feature>
<feature type="compositionally biased region" description="Polar residues" evidence="3">
    <location>
        <begin position="580"/>
        <end position="592"/>
    </location>
</feature>
<feature type="compositionally biased region" description="Polar residues" evidence="3">
    <location>
        <begin position="603"/>
        <end position="629"/>
    </location>
</feature>
<feature type="active site" description="Proton acceptor" evidence="1 2">
    <location>
        <position position="131"/>
    </location>
</feature>
<feature type="binding site" evidence="1">
    <location>
        <begin position="19"/>
        <end position="27"/>
    </location>
    <ligand>
        <name>ATP</name>
        <dbReference type="ChEBI" id="CHEBI:30616"/>
    </ligand>
</feature>
<feature type="binding site" evidence="1">
    <location>
        <position position="41"/>
    </location>
    <ligand>
        <name>ATP</name>
        <dbReference type="ChEBI" id="CHEBI:30616"/>
    </ligand>
</feature>
<feature type="mutagenesis site" description="Loss of function." evidence="4">
    <original>K</original>
    <variation>M</variation>
    <location>
        <position position="41"/>
    </location>
</feature>
<feature type="mutagenesis site" description="In it4; induces an arrest in cell division at all stages of development." evidence="4">
    <original>R</original>
    <variation>Q</variation>
    <location>
        <position position="371"/>
    </location>
</feature>
<feature type="mutagenesis site" description="In b1; induces an arrest in cell division at all stages of development." evidence="4">
    <original>P</original>
    <variation>L</variation>
    <location>
        <position position="432"/>
    </location>
</feature>
<feature type="mutagenesis site" description="In it25; temperature-sensitive mutant. At 20 degrees Celsius, nearly 100% of progeny are viable. At 24 degrees Celsius, over 90% of progeny are embryonic lethal. Embryonic lethality arises due to failure to duplicate the sperm-derived centriolar pair, failure to assemble the bipolar spindle, and failure of the embryo to develop beyond the two-cell stage. The embryonic lethality phenotype is rescued in a szy-20 (bs52) loss of function mutant background at 24 degrees Celsius, due to suppression of the centrosome duplication defect (in the zyg-2 single mutant) and successful assembly of the bipolar spindle." evidence="9 12">
    <original>P</original>
    <variation>L</variation>
    <location>
        <position position="442"/>
    </location>
</feature>
<feature type="strand" evidence="15">
    <location>
        <begin position="364"/>
        <end position="366"/>
    </location>
</feature>
<feature type="strand" evidence="15">
    <location>
        <begin position="368"/>
        <end position="376"/>
    </location>
</feature>
<feature type="strand" evidence="15">
    <location>
        <begin position="379"/>
        <end position="385"/>
    </location>
</feature>
<feature type="strand" evidence="15">
    <location>
        <begin position="389"/>
        <end position="400"/>
    </location>
</feature>
<feature type="strand" evidence="15">
    <location>
        <begin position="403"/>
        <end position="410"/>
    </location>
</feature>
<feature type="strand" evidence="15">
    <location>
        <begin position="415"/>
        <end position="417"/>
    </location>
</feature>
<feature type="strand" evidence="15">
    <location>
        <begin position="433"/>
        <end position="437"/>
    </location>
</feature>
<feature type="helix" evidence="15">
    <location>
        <begin position="438"/>
        <end position="440"/>
    </location>
</feature>
<feature type="helix" evidence="15">
    <location>
        <begin position="443"/>
        <end position="457"/>
    </location>
</feature>
<feature type="turn" evidence="15">
    <location>
        <begin position="458"/>
        <end position="463"/>
    </location>
</feature>
<feature type="strand" evidence="15">
    <location>
        <begin position="464"/>
        <end position="471"/>
    </location>
</feature>
<feature type="strand" evidence="15">
    <location>
        <begin position="478"/>
        <end position="483"/>
    </location>
</feature>
<feature type="strand" evidence="15">
    <location>
        <begin position="488"/>
        <end position="492"/>
    </location>
</feature>
<feature type="strand" evidence="15">
    <location>
        <begin position="495"/>
        <end position="499"/>
    </location>
</feature>
<feature type="turn" evidence="15">
    <location>
        <begin position="501"/>
        <end position="503"/>
    </location>
</feature>
<feature type="strand" evidence="15">
    <location>
        <begin position="506"/>
        <end position="508"/>
    </location>
</feature>
<feature type="helix" evidence="15">
    <location>
        <begin position="525"/>
        <end position="542"/>
    </location>
</feature>
<feature type="strand" evidence="15">
    <location>
        <begin position="553"/>
        <end position="556"/>
    </location>
</feature>
<comment type="function">
    <text evidence="4 5 6 7 9 10 11 12">Protein kinase that plays a central role in centrosome duplication, control of centrosome size, spindle formation and nuclear envelope breakdown during cell divisions (PubMed:11371350, PubMed:15232593, PubMed:15665853, PubMed:18765790, PubMed:19081077, PubMed:19109417, PubMed:22623721, PubMed:27689799). Paternal copy is required to regulate synthesis of daughter centrioles prior to fertilization (PubMed:11371350, PubMed:18765790). Maternal copy regulates centrosome duplication during later cell cycles (PubMed:11371350, PubMed:18765790). Functions upstream of sas-5 and sas-6, and is required for their localization to the centrosome (PubMed:15232593, PubMed:15665853). Its role in nuclear envelope breakdown is mediated by the spindly-like protein spdl-1 and the RZZ complex, which in turn recruits the spindle checkpoint proteins mdf-1 and mdf-2, dynein and dynactin to unattached kinetochores (PubMed:18765790, PubMed:18936247).</text>
</comment>
<comment type="catalytic activity">
    <reaction>
        <text>L-seryl-[protein] + ATP = O-phospho-L-seryl-[protein] + ADP + H(+)</text>
        <dbReference type="Rhea" id="RHEA:17989"/>
        <dbReference type="Rhea" id="RHEA-COMP:9863"/>
        <dbReference type="Rhea" id="RHEA-COMP:11604"/>
        <dbReference type="ChEBI" id="CHEBI:15378"/>
        <dbReference type="ChEBI" id="CHEBI:29999"/>
        <dbReference type="ChEBI" id="CHEBI:30616"/>
        <dbReference type="ChEBI" id="CHEBI:83421"/>
        <dbReference type="ChEBI" id="CHEBI:456216"/>
        <dbReference type="EC" id="2.7.11.1"/>
    </reaction>
</comment>
<comment type="catalytic activity">
    <reaction>
        <text>L-threonyl-[protein] + ATP = O-phospho-L-threonyl-[protein] + ADP + H(+)</text>
        <dbReference type="Rhea" id="RHEA:46608"/>
        <dbReference type="Rhea" id="RHEA-COMP:11060"/>
        <dbReference type="Rhea" id="RHEA-COMP:11605"/>
        <dbReference type="ChEBI" id="CHEBI:15378"/>
        <dbReference type="ChEBI" id="CHEBI:30013"/>
        <dbReference type="ChEBI" id="CHEBI:30616"/>
        <dbReference type="ChEBI" id="CHEBI:61977"/>
        <dbReference type="ChEBI" id="CHEBI:456216"/>
        <dbReference type="EC" id="2.7.11.1"/>
    </reaction>
</comment>
<comment type="subunit">
    <text evidence="11">Interacts with sel-10.</text>
</comment>
<comment type="interaction">
    <interactant intactId="EBI-323555">
        <id>Q9GT24</id>
    </interactant>
    <interactant intactId="EBI-320962">
        <id>P91870</id>
        <label>spd-2</label>
    </interactant>
    <organismsDiffer>false</organismsDiffer>
    <experiments>6</experiments>
</comment>
<comment type="interaction">
    <interactant intactId="EBI-323555">
        <id>Q9GT24</id>
    </interactant>
    <interactant intactId="EBI-323555">
        <id>Q9GT24</id>
        <label>zyg-1</label>
    </interactant>
    <organismsDiffer>false</organismsDiffer>
    <experiments>4</experiments>
</comment>
<comment type="subcellular location">
    <subcellularLocation>
        <location evidence="4 9 11 12">Cytoplasm</location>
        <location evidence="4 9 11 12">Cytoskeleton</location>
        <location evidence="4 9 11 12">Microtubule organizing center</location>
        <location evidence="4 9 11 12">Centrosome</location>
    </subcellularLocation>
    <subcellularLocation>
        <location evidence="4 9">Cytoplasm</location>
        <location evidence="4 9">Cytoskeleton</location>
        <location evidence="4 9">Microtubule organizing center</location>
        <location evidence="4 9">Centrosome</location>
        <location evidence="4 9">Centriole</location>
    </subcellularLocation>
    <text>Component of the centrosome (PubMed:11371350). Present at centrioles only immediately before their duplication (PubMed:11371350). Expression at centrosomes increases from prophase to anaphase during mitosis (PubMed:22623721).</text>
</comment>
<comment type="developmental stage">
    <text evidence="11">Expressed from one cell stage embryos.</text>
</comment>
<comment type="PTM">
    <text evidence="11">Probably ubiquitinated by the SCF(sel-10) and SCF(lin-23) E3 ubiquitin ligase complexes, leading to its proteasomal degradation.</text>
</comment>
<comment type="disruption phenotype">
    <text evidence="7 8">RNAi-mediated knockdown results in a normal first cell cycle division due to intact centrioles which are contributed by sperm (PubMed:18765790). However, during the first cycle division, centrioles exhibit duplication defects resulting in delayed nuclear envelope breakdown, the accumulation of the spindle checkpoint proteins mdf-1 and mdf-2 at kinetochores, and the formation of a monopolar spindle in the subsequent mitotic division (PubMed:18765790, PubMed:18936247). At the two-cell stage, condensed chromosomes form an arc around the single microtubule aster that is nucleated from the centrosome (PubMed:18936247). The spindly-like protein spdl-1 and the spindle checkpoint protein mdf-1 accumulate along the outer side of this arc (PubMed:18936247). After the nuclear envelope breakdown of the second mitotic division, dynein and dynactin accumulate at unattached kinetochores (PubMed:18765790).</text>
</comment>
<comment type="similarity">
    <text evidence="1">Belongs to the protein kinase superfamily. Ser/Thr protein kinase family.</text>
</comment>
<comment type="caution">
    <text evidence="13">Although it is unknown whether it is a serine/threonine or a tyrosine protein kinase, it is strongly related to serine/threonine-protein kinase family.</text>
</comment>
<accession>Q9GT24</accession>
<accession>O01903</accession>
<name>ZYG1_CAEEL</name>
<organism>
    <name type="scientific">Caenorhabditis elegans</name>
    <dbReference type="NCBI Taxonomy" id="6239"/>
    <lineage>
        <taxon>Eukaryota</taxon>
        <taxon>Metazoa</taxon>
        <taxon>Ecdysozoa</taxon>
        <taxon>Nematoda</taxon>
        <taxon>Chromadorea</taxon>
        <taxon>Rhabditida</taxon>
        <taxon>Rhabditina</taxon>
        <taxon>Rhabditomorpha</taxon>
        <taxon>Rhabditoidea</taxon>
        <taxon>Rhabditidae</taxon>
        <taxon>Peloderinae</taxon>
        <taxon>Caenorhabditis</taxon>
    </lineage>
</organism>
<keyword id="KW-0002">3D-structure</keyword>
<keyword id="KW-0067">ATP-binding</keyword>
<keyword id="KW-0131">Cell cycle</keyword>
<keyword id="KW-0963">Cytoplasm</keyword>
<keyword id="KW-0206">Cytoskeleton</keyword>
<keyword id="KW-0217">Developmental protein</keyword>
<keyword id="KW-0418">Kinase</keyword>
<keyword id="KW-0547">Nucleotide-binding</keyword>
<keyword id="KW-1185">Reference proteome</keyword>
<keyword id="KW-0723">Serine/threonine-protein kinase</keyword>
<keyword id="KW-0808">Transferase</keyword>
<keyword id="KW-0832">Ubl conjugation</keyword>